<keyword id="KW-0113">Calvin cycle</keyword>
<keyword id="KW-0120">Carbon dioxide fixation</keyword>
<keyword id="KW-0150">Chloroplast</keyword>
<keyword id="KW-0456">Lyase</keyword>
<keyword id="KW-0460">Magnesium</keyword>
<keyword id="KW-0479">Metal-binding</keyword>
<keyword id="KW-0503">Monooxygenase</keyword>
<keyword id="KW-0560">Oxidoreductase</keyword>
<keyword id="KW-0601">Photorespiration</keyword>
<keyword id="KW-0602">Photosynthesis</keyword>
<keyword id="KW-0934">Plastid</keyword>
<sequence length="467" mass="51379">PYAKMGYWDPDYVVKDTDVLALFRVSPQPGVDPVEASAAVAGESSTATWTVVWTDLLTACDLYRAKAYKVDAVPNTTDQYFAYIAYDIDLFEEGSIANLTASIXGXVFGFKALKALRLEDMRLPVAYLKTFQGPATGVICERERMDKFGRPFLGATVKPKLGLSGKNYGRVVYEGLKGGLDFLKDDENINSQPFMRWKERYLYSMEGVNRAIAAAGETKGHYLNVTAATMEQIYERAEFAKQLGSIIVMVDLVIGYTAIQSMAIWARKNDMILHLHRAGNSTYSRQKIHGMNFRVICKWMRMAGVDHIHAGTVVGKLEGDPVXXXXXXXXXXXXXXXXNLPQGIFFEQDWASLRKVTPVASGGIHCGQMHQLLDYLGVDVVLQFGGGTIGHPDGIQAGATANRVALESMVIARNEGRDFVAEGPQILQDAAKTCGPLQTALDLWKDISFNYTSTDTADLVETPTANV</sequence>
<dbReference type="EC" id="4.1.1.39"/>
<dbReference type="EMBL" id="U02984">
    <property type="protein sequence ID" value="AAC36428.1"/>
    <property type="molecule type" value="Genomic_DNA"/>
</dbReference>
<dbReference type="GO" id="GO:0009507">
    <property type="term" value="C:chloroplast"/>
    <property type="evidence" value="ECO:0007669"/>
    <property type="project" value="UniProtKB-SubCell"/>
</dbReference>
<dbReference type="GO" id="GO:0000287">
    <property type="term" value="F:magnesium ion binding"/>
    <property type="evidence" value="ECO:0007669"/>
    <property type="project" value="InterPro"/>
</dbReference>
<dbReference type="GO" id="GO:0004497">
    <property type="term" value="F:monooxygenase activity"/>
    <property type="evidence" value="ECO:0007669"/>
    <property type="project" value="UniProtKB-KW"/>
</dbReference>
<dbReference type="GO" id="GO:0016984">
    <property type="term" value="F:ribulose-bisphosphate carboxylase activity"/>
    <property type="evidence" value="ECO:0007669"/>
    <property type="project" value="UniProtKB-EC"/>
</dbReference>
<dbReference type="GO" id="GO:0019253">
    <property type="term" value="P:reductive pentose-phosphate cycle"/>
    <property type="evidence" value="ECO:0007669"/>
    <property type="project" value="UniProtKB-KW"/>
</dbReference>
<dbReference type="CDD" id="cd08212">
    <property type="entry name" value="RuBisCO_large_I"/>
    <property type="match status" value="1"/>
</dbReference>
<dbReference type="Gene3D" id="3.20.20.110">
    <property type="entry name" value="Ribulose bisphosphate carboxylase, large subunit, C-terminal domain"/>
    <property type="match status" value="1"/>
</dbReference>
<dbReference type="Gene3D" id="3.30.70.150">
    <property type="entry name" value="RuBisCO large subunit, N-terminal domain"/>
    <property type="match status" value="1"/>
</dbReference>
<dbReference type="InterPro" id="IPR033966">
    <property type="entry name" value="RuBisCO"/>
</dbReference>
<dbReference type="InterPro" id="IPR020878">
    <property type="entry name" value="RuBisCo_large_chain_AS"/>
</dbReference>
<dbReference type="InterPro" id="IPR000685">
    <property type="entry name" value="RuBisCO_lsu_C"/>
</dbReference>
<dbReference type="InterPro" id="IPR036376">
    <property type="entry name" value="RuBisCO_lsu_C_sf"/>
</dbReference>
<dbReference type="InterPro" id="IPR017443">
    <property type="entry name" value="RuBisCO_lsu_fd_N"/>
</dbReference>
<dbReference type="InterPro" id="IPR036422">
    <property type="entry name" value="RuBisCO_lsu_N_sf"/>
</dbReference>
<dbReference type="InterPro" id="IPR020888">
    <property type="entry name" value="RuBisCO_lsuI"/>
</dbReference>
<dbReference type="NCBIfam" id="NF003252">
    <property type="entry name" value="PRK04208.1"/>
    <property type="match status" value="1"/>
</dbReference>
<dbReference type="PANTHER" id="PTHR42704">
    <property type="entry name" value="RIBULOSE BISPHOSPHATE CARBOXYLASE"/>
    <property type="match status" value="1"/>
</dbReference>
<dbReference type="PANTHER" id="PTHR42704:SF17">
    <property type="entry name" value="RIBULOSE BISPHOSPHATE CARBOXYLASE LARGE CHAIN"/>
    <property type="match status" value="1"/>
</dbReference>
<dbReference type="Pfam" id="PF00016">
    <property type="entry name" value="RuBisCO_large"/>
    <property type="match status" value="1"/>
</dbReference>
<dbReference type="Pfam" id="PF02788">
    <property type="entry name" value="RuBisCO_large_N"/>
    <property type="match status" value="1"/>
</dbReference>
<dbReference type="SFLD" id="SFLDG01052">
    <property type="entry name" value="RuBisCO"/>
    <property type="match status" value="1"/>
</dbReference>
<dbReference type="SFLD" id="SFLDS00014">
    <property type="entry name" value="RuBisCO"/>
    <property type="match status" value="1"/>
</dbReference>
<dbReference type="SFLD" id="SFLDG00301">
    <property type="entry name" value="RuBisCO-like_proteins"/>
    <property type="match status" value="1"/>
</dbReference>
<dbReference type="SUPFAM" id="SSF51649">
    <property type="entry name" value="RuBisCo, C-terminal domain"/>
    <property type="match status" value="1"/>
</dbReference>
<dbReference type="SUPFAM" id="SSF54966">
    <property type="entry name" value="RuBisCO, large subunit, small (N-terminal) domain"/>
    <property type="match status" value="1"/>
</dbReference>
<dbReference type="PROSITE" id="PS00157">
    <property type="entry name" value="RUBISCO_LARGE"/>
    <property type="match status" value="1"/>
</dbReference>
<proteinExistence type="inferred from homology"/>
<geneLocation type="chloroplast"/>
<reference key="1">
    <citation type="journal article" date="1994" name="Bot. Marina">
        <title>Phylogenetic systematics and biogeography of the Gigartinaceae (Gigartinales, Rhodophyta) based on sequence analysis of rbcL.</title>
        <authorList>
            <person name="Hommersand M.H."/>
            <person name="Fredericq S."/>
            <person name="Freshwater D.W."/>
        </authorList>
    </citation>
    <scope>NUCLEOTIDE SEQUENCE [GENOMIC DNA]</scope>
</reference>
<feature type="chain" id="PRO_0000062410" description="Ribulose bisphosphate carboxylase large chain">
    <location>
        <begin position="1" status="less than"/>
        <end position="467"/>
    </location>
</feature>
<feature type="active site" description="Proton acceptor" evidence="1">
    <location>
        <position position="158"/>
    </location>
</feature>
<feature type="active site" description="Proton acceptor" evidence="1">
    <location>
        <position position="276"/>
    </location>
</feature>
<feature type="binding site" description="in homodimeric partner" evidence="1">
    <location>
        <position position="106"/>
    </location>
    <ligand>
        <name>substrate</name>
    </ligand>
</feature>
<feature type="binding site" evidence="1">
    <location>
        <position position="156"/>
    </location>
    <ligand>
        <name>substrate</name>
    </ligand>
</feature>
<feature type="binding site" evidence="1">
    <location>
        <position position="160"/>
    </location>
    <ligand>
        <name>substrate</name>
    </ligand>
</feature>
<feature type="binding site" description="via carbamate group" evidence="2">
    <location>
        <position position="184"/>
    </location>
    <ligand>
        <name>Mg(2+)</name>
        <dbReference type="ChEBI" id="CHEBI:18420"/>
    </ligand>
</feature>
<feature type="binding site" evidence="2">
    <location>
        <position position="186"/>
    </location>
    <ligand>
        <name>Mg(2+)</name>
        <dbReference type="ChEBI" id="CHEBI:18420"/>
    </ligand>
</feature>
<feature type="binding site" evidence="2">
    <location>
        <position position="187"/>
    </location>
    <ligand>
        <name>Mg(2+)</name>
        <dbReference type="ChEBI" id="CHEBI:18420"/>
    </ligand>
</feature>
<feature type="binding site" evidence="1">
    <location>
        <position position="277"/>
    </location>
    <ligand>
        <name>substrate</name>
    </ligand>
</feature>
<feature type="binding site" evidence="1">
    <location>
        <position position="309"/>
    </location>
    <ligand>
        <name>substrate</name>
    </ligand>
</feature>
<feature type="binding site" evidence="1">
    <location>
        <position position="361"/>
    </location>
    <ligand>
        <name>substrate</name>
    </ligand>
</feature>
<feature type="site" description="Transition state stabilizer" evidence="1">
    <location>
        <position position="316"/>
    </location>
</feature>
<feature type="modified residue" description="N6-carboxylysine" evidence="2">
    <location>
        <position position="184"/>
    </location>
</feature>
<feature type="non-terminal residue">
    <location>
        <position position="1"/>
    </location>
</feature>
<organism>
    <name type="scientific">Chondrus crispus</name>
    <name type="common">Carrageen Irish moss</name>
    <name type="synonym">Polymorpha crispa</name>
    <dbReference type="NCBI Taxonomy" id="2769"/>
    <lineage>
        <taxon>Eukaryota</taxon>
        <taxon>Rhodophyta</taxon>
        <taxon>Florideophyceae</taxon>
        <taxon>Rhodymeniophycidae</taxon>
        <taxon>Gigartinales</taxon>
        <taxon>Gigartinaceae</taxon>
        <taxon>Chondrus</taxon>
    </lineage>
</organism>
<protein>
    <recommendedName>
        <fullName>Ribulose bisphosphate carboxylase large chain</fullName>
        <shortName>RuBisCO large subunit</shortName>
        <ecNumber>4.1.1.39</ecNumber>
    </recommendedName>
</protein>
<gene>
    <name type="primary">rbcL</name>
</gene>
<accession>P48691</accession>
<evidence type="ECO:0000250" key="1"/>
<evidence type="ECO:0000255" key="2">
    <source>
        <dbReference type="PROSITE-ProRule" id="PRU10114"/>
    </source>
</evidence>
<evidence type="ECO:0000305" key="3"/>
<comment type="function">
    <text evidence="1">RuBisCO catalyzes two reactions: the carboxylation of D-ribulose 1,5-bisphosphate, the primary event in carbon dioxide fixation, as well as the oxidative fragmentation of the pentose substrate in the photorespiration process. Both reactions occur simultaneously and in competition at the same active site (By similarity).</text>
</comment>
<comment type="catalytic activity">
    <reaction>
        <text>2 (2R)-3-phosphoglycerate + 2 H(+) = D-ribulose 1,5-bisphosphate + CO2 + H2O</text>
        <dbReference type="Rhea" id="RHEA:23124"/>
        <dbReference type="ChEBI" id="CHEBI:15377"/>
        <dbReference type="ChEBI" id="CHEBI:15378"/>
        <dbReference type="ChEBI" id="CHEBI:16526"/>
        <dbReference type="ChEBI" id="CHEBI:57870"/>
        <dbReference type="ChEBI" id="CHEBI:58272"/>
        <dbReference type="EC" id="4.1.1.39"/>
    </reaction>
</comment>
<comment type="catalytic activity">
    <reaction>
        <text>D-ribulose 1,5-bisphosphate + O2 = 2-phosphoglycolate + (2R)-3-phosphoglycerate + 2 H(+)</text>
        <dbReference type="Rhea" id="RHEA:36631"/>
        <dbReference type="ChEBI" id="CHEBI:15378"/>
        <dbReference type="ChEBI" id="CHEBI:15379"/>
        <dbReference type="ChEBI" id="CHEBI:57870"/>
        <dbReference type="ChEBI" id="CHEBI:58033"/>
        <dbReference type="ChEBI" id="CHEBI:58272"/>
    </reaction>
</comment>
<comment type="cofactor">
    <cofactor evidence="1">
        <name>Mg(2+)</name>
        <dbReference type="ChEBI" id="CHEBI:18420"/>
    </cofactor>
    <text evidence="1">Binds 1 Mg(2+) ion per subunit.</text>
</comment>
<comment type="subunit">
    <text evidence="1">Heterohexadecamer of 8 large chains and 8 small chains.</text>
</comment>
<comment type="subcellular location">
    <subcellularLocation>
        <location>Plastid</location>
        <location>Chloroplast</location>
    </subcellularLocation>
</comment>
<comment type="miscellaneous">
    <text evidence="1">The basic functional RuBisCO is composed of a large chain homodimer in a 'head-to-tail' conformation. In form I RuBisCO this homodimer is arranged in a barrel-like tetramer with the small subunits forming a tetrameric 'cap' on each end of the 'barrel' (By similarity).</text>
</comment>
<comment type="similarity">
    <text evidence="3">Belongs to the RuBisCO large chain family. Type I subfamily.</text>
</comment>
<name>RBL_CHOCR</name>